<keyword id="KW-0963">Cytoplasm</keyword>
<keyword id="KW-0489">Methyltransferase</keyword>
<keyword id="KW-0698">rRNA processing</keyword>
<keyword id="KW-0949">S-adenosyl-L-methionine</keyword>
<keyword id="KW-0808">Transferase</keyword>
<sequence length="239" mass="26937">MKFYDLMCKAAQDVGLELSKEQYEKFIIYKNLLQEWNEKVNLTAITEDEDIIKKHFIDSIKAFKRDEFKEAKTLIDVGTGAGFPGIPVAIMNENIQVTLLDSLNKRVNFLNLVTEKLGLKNVVAIHSRAEDGARQKNLRESFDIATSRAVANMSVLSEFCLPYVKINGHFIALKGPAVEEEIKDSDKAITTLGGQLLDICEVEIEDTELKHNLVVVKKIKECPKVYPRKAGNVTKKPIK</sequence>
<protein>
    <recommendedName>
        <fullName evidence="1">Ribosomal RNA small subunit methyltransferase G</fullName>
        <ecNumber evidence="1">2.1.1.-</ecNumber>
    </recommendedName>
    <alternativeName>
        <fullName evidence="1">16S rRNA 7-methylguanosine methyltransferase</fullName>
        <shortName evidence="1">16S rRNA m7G methyltransferase</shortName>
    </alternativeName>
</protein>
<name>RSMG_CLOBA</name>
<reference key="1">
    <citation type="submission" date="2008-05" db="EMBL/GenBank/DDBJ databases">
        <title>Complete genome sequence of Clostridium botulinum E3 str. Alaska E43.</title>
        <authorList>
            <person name="Brinkac L.M."/>
            <person name="Brown J.L."/>
            <person name="Bruce D."/>
            <person name="Detter C."/>
            <person name="Munk C."/>
            <person name="Smith L.A."/>
            <person name="Smith T.J."/>
            <person name="Sutton G."/>
            <person name="Brettin T.S."/>
        </authorList>
    </citation>
    <scope>NUCLEOTIDE SEQUENCE [LARGE SCALE GENOMIC DNA]</scope>
    <source>
        <strain>Alaska E43 / Type E3</strain>
    </source>
</reference>
<feature type="chain" id="PRO_1000092621" description="Ribosomal RNA small subunit methyltransferase G">
    <location>
        <begin position="1"/>
        <end position="239"/>
    </location>
</feature>
<feature type="binding site" evidence="1">
    <location>
        <position position="78"/>
    </location>
    <ligand>
        <name>S-adenosyl-L-methionine</name>
        <dbReference type="ChEBI" id="CHEBI:59789"/>
    </ligand>
</feature>
<feature type="binding site" evidence="1">
    <location>
        <position position="83"/>
    </location>
    <ligand>
        <name>S-adenosyl-L-methionine</name>
        <dbReference type="ChEBI" id="CHEBI:59789"/>
    </ligand>
</feature>
<feature type="binding site" evidence="1">
    <location>
        <begin position="129"/>
        <end position="130"/>
    </location>
    <ligand>
        <name>S-adenosyl-L-methionine</name>
        <dbReference type="ChEBI" id="CHEBI:59789"/>
    </ligand>
</feature>
<feature type="binding site" evidence="1">
    <location>
        <position position="148"/>
    </location>
    <ligand>
        <name>S-adenosyl-L-methionine</name>
        <dbReference type="ChEBI" id="CHEBI:59789"/>
    </ligand>
</feature>
<proteinExistence type="inferred from homology"/>
<gene>
    <name evidence="1" type="primary">rsmG</name>
    <name type="ordered locus">CLH_3392</name>
</gene>
<dbReference type="EC" id="2.1.1.-" evidence="1"/>
<dbReference type="EMBL" id="CP001078">
    <property type="protein sequence ID" value="ACD52261.1"/>
    <property type="molecule type" value="Genomic_DNA"/>
</dbReference>
<dbReference type="RefSeq" id="WP_012450446.1">
    <property type="nucleotide sequence ID" value="NC_010723.1"/>
</dbReference>
<dbReference type="SMR" id="B2V1U8"/>
<dbReference type="KEGG" id="cbt:CLH_3392"/>
<dbReference type="HOGENOM" id="CLU_065341_0_0_9"/>
<dbReference type="GO" id="GO:0005829">
    <property type="term" value="C:cytosol"/>
    <property type="evidence" value="ECO:0007669"/>
    <property type="project" value="TreeGrafter"/>
</dbReference>
<dbReference type="GO" id="GO:0070043">
    <property type="term" value="F:rRNA (guanine-N7-)-methyltransferase activity"/>
    <property type="evidence" value="ECO:0007669"/>
    <property type="project" value="UniProtKB-UniRule"/>
</dbReference>
<dbReference type="FunFam" id="3.40.50.150:FF:000041">
    <property type="entry name" value="Ribosomal RNA small subunit methyltransferase G"/>
    <property type="match status" value="1"/>
</dbReference>
<dbReference type="Gene3D" id="3.40.50.150">
    <property type="entry name" value="Vaccinia Virus protein VP39"/>
    <property type="match status" value="1"/>
</dbReference>
<dbReference type="HAMAP" id="MF_00074">
    <property type="entry name" value="16SrRNA_methyltr_G"/>
    <property type="match status" value="1"/>
</dbReference>
<dbReference type="InterPro" id="IPR003682">
    <property type="entry name" value="rRNA_ssu_MeTfrase_G"/>
</dbReference>
<dbReference type="InterPro" id="IPR029063">
    <property type="entry name" value="SAM-dependent_MTases_sf"/>
</dbReference>
<dbReference type="NCBIfam" id="TIGR00138">
    <property type="entry name" value="rsmG_gidB"/>
    <property type="match status" value="1"/>
</dbReference>
<dbReference type="PANTHER" id="PTHR31760">
    <property type="entry name" value="S-ADENOSYL-L-METHIONINE-DEPENDENT METHYLTRANSFERASES SUPERFAMILY PROTEIN"/>
    <property type="match status" value="1"/>
</dbReference>
<dbReference type="PANTHER" id="PTHR31760:SF0">
    <property type="entry name" value="S-ADENOSYL-L-METHIONINE-DEPENDENT METHYLTRANSFERASES SUPERFAMILY PROTEIN"/>
    <property type="match status" value="1"/>
</dbReference>
<dbReference type="Pfam" id="PF02527">
    <property type="entry name" value="GidB"/>
    <property type="match status" value="1"/>
</dbReference>
<dbReference type="PIRSF" id="PIRSF003078">
    <property type="entry name" value="GidB"/>
    <property type="match status" value="1"/>
</dbReference>
<dbReference type="SUPFAM" id="SSF53335">
    <property type="entry name" value="S-adenosyl-L-methionine-dependent methyltransferases"/>
    <property type="match status" value="1"/>
</dbReference>
<evidence type="ECO:0000255" key="1">
    <source>
        <dbReference type="HAMAP-Rule" id="MF_00074"/>
    </source>
</evidence>
<comment type="function">
    <text evidence="1">Specifically methylates the N7 position of a guanine in 16S rRNA.</text>
</comment>
<comment type="subcellular location">
    <subcellularLocation>
        <location evidence="1">Cytoplasm</location>
    </subcellularLocation>
</comment>
<comment type="similarity">
    <text evidence="1">Belongs to the methyltransferase superfamily. RNA methyltransferase RsmG family.</text>
</comment>
<organism>
    <name type="scientific">Clostridium botulinum (strain Alaska E43 / Type E3)</name>
    <dbReference type="NCBI Taxonomy" id="508767"/>
    <lineage>
        <taxon>Bacteria</taxon>
        <taxon>Bacillati</taxon>
        <taxon>Bacillota</taxon>
        <taxon>Clostridia</taxon>
        <taxon>Eubacteriales</taxon>
        <taxon>Clostridiaceae</taxon>
        <taxon>Clostridium</taxon>
    </lineage>
</organism>
<accession>B2V1U8</accession>